<reference key="1">
    <citation type="journal article" date="2011" name="Plant Physiol.">
        <title>Comprehensive sequence analysis of 24,783 barley full-length cDNAs derived from 12 clone libraries.</title>
        <authorList>
            <person name="Matsumoto T."/>
            <person name="Tanaka T."/>
            <person name="Sakai H."/>
            <person name="Amano N."/>
            <person name="Kanamori H."/>
            <person name="Kurita K."/>
            <person name="Kikuta A."/>
            <person name="Kamiya K."/>
            <person name="Yamamoto M."/>
            <person name="Ikawa H."/>
            <person name="Fujii N."/>
            <person name="Hori K."/>
            <person name="Itoh T."/>
            <person name="Sato K."/>
        </authorList>
    </citation>
    <scope>NUCLEOTIDE SEQUENCE [LARGE SCALE MRNA]</scope>
    <source>
        <strain>cv. Haruna Nijo</strain>
        <tissue>Flower</tissue>
    </source>
</reference>
<reference key="2">
    <citation type="journal article" date="2014" name="Plant Physiol.">
        <title>Functional and evolutionary analysis of the CASPARIAN STRIP MEMBRANE DOMAIN PROTEIN family.</title>
        <authorList>
            <person name="Roppolo D."/>
            <person name="Boeckmann B."/>
            <person name="Pfister A."/>
            <person name="Boutet E."/>
            <person name="Rubio M.C."/>
            <person name="Denervaud-Tendon V."/>
            <person name="Vermeer J.E."/>
            <person name="Gheyselinck J."/>
            <person name="Xenarios I."/>
            <person name="Geldner N."/>
        </authorList>
    </citation>
    <scope>GENE FAMILY</scope>
    <scope>NOMENCLATURE</scope>
</reference>
<evidence type="ECO:0000250" key="1"/>
<evidence type="ECO:0000255" key="2"/>
<evidence type="ECO:0000256" key="3">
    <source>
        <dbReference type="SAM" id="MobiDB-lite"/>
    </source>
</evidence>
<evidence type="ECO:0000305" key="4"/>
<feature type="chain" id="PRO_0000417771" description="CASP-like protein 3A1">
    <location>
        <begin position="1"/>
        <end position="208"/>
    </location>
</feature>
<feature type="topological domain" description="Cytoplasmic" evidence="2">
    <location>
        <begin position="1"/>
        <end position="43"/>
    </location>
</feature>
<feature type="transmembrane region" description="Helical" evidence="2">
    <location>
        <begin position="44"/>
        <end position="64"/>
    </location>
</feature>
<feature type="topological domain" description="Extracellular" evidence="2">
    <location>
        <begin position="65"/>
        <end position="92"/>
    </location>
</feature>
<feature type="transmembrane region" description="Helical" evidence="2">
    <location>
        <begin position="93"/>
        <end position="113"/>
    </location>
</feature>
<feature type="topological domain" description="Cytoplasmic" evidence="2">
    <location>
        <begin position="114"/>
        <end position="128"/>
    </location>
</feature>
<feature type="transmembrane region" description="Helical" evidence="2">
    <location>
        <begin position="129"/>
        <end position="149"/>
    </location>
</feature>
<feature type="topological domain" description="Extracellular" evidence="2">
    <location>
        <begin position="150"/>
        <end position="183"/>
    </location>
</feature>
<feature type="transmembrane region" description="Helical" evidence="2">
    <location>
        <begin position="184"/>
        <end position="204"/>
    </location>
</feature>
<feature type="topological domain" description="Cytoplasmic" evidence="2">
    <location>
        <begin position="205"/>
        <end position="208"/>
    </location>
</feature>
<feature type="region of interest" description="Disordered" evidence="3">
    <location>
        <begin position="1"/>
        <end position="33"/>
    </location>
</feature>
<feature type="compositionally biased region" description="Polar residues" evidence="3">
    <location>
        <begin position="1"/>
        <end position="11"/>
    </location>
</feature>
<feature type="compositionally biased region" description="Polar residues" evidence="3">
    <location>
        <begin position="17"/>
        <end position="33"/>
    </location>
</feature>
<feature type="glycosylation site" description="N-linked (GlcNAc...) asparagine" evidence="2">
    <location>
        <position position="157"/>
    </location>
</feature>
<comment type="subunit">
    <text evidence="1">Homodimer and heterodimers.</text>
</comment>
<comment type="subcellular location">
    <subcellularLocation>
        <location evidence="1">Cell membrane</location>
        <topology evidence="1">Multi-pass membrane protein</topology>
    </subcellularLocation>
</comment>
<comment type="similarity">
    <text evidence="4">Belongs to the Casparian strip membrane proteins (CASP) family.</text>
</comment>
<dbReference type="EMBL" id="AK376910">
    <property type="protein sequence ID" value="BAK08104.1"/>
    <property type="molecule type" value="mRNA"/>
</dbReference>
<dbReference type="SMR" id="F2EL82"/>
<dbReference type="FunCoup" id="F2EL82">
    <property type="interactions" value="679"/>
</dbReference>
<dbReference type="STRING" id="112509.F2EL82"/>
<dbReference type="PaxDb" id="4513-MLOC_7990.1"/>
<dbReference type="eggNOG" id="ENOG502RN9B">
    <property type="taxonomic scope" value="Eukaryota"/>
</dbReference>
<dbReference type="InParanoid" id="F2EL82"/>
<dbReference type="Proteomes" id="UP000011116">
    <property type="component" value="Unassembled WGS sequence"/>
</dbReference>
<dbReference type="GO" id="GO:0005886">
    <property type="term" value="C:plasma membrane"/>
    <property type="evidence" value="ECO:0007669"/>
    <property type="project" value="UniProtKB-SubCell"/>
</dbReference>
<dbReference type="InterPro" id="IPR006459">
    <property type="entry name" value="CASP/CASPL"/>
</dbReference>
<dbReference type="InterPro" id="IPR006702">
    <property type="entry name" value="CASP_dom"/>
</dbReference>
<dbReference type="NCBIfam" id="TIGR01569">
    <property type="entry name" value="A_tha_TIGR01569"/>
    <property type="match status" value="1"/>
</dbReference>
<dbReference type="PANTHER" id="PTHR33573:SF48">
    <property type="entry name" value="CASP-LIKE PROTEIN 3A1"/>
    <property type="match status" value="1"/>
</dbReference>
<dbReference type="PANTHER" id="PTHR33573">
    <property type="entry name" value="CASP-LIKE PROTEIN 4A4"/>
    <property type="match status" value="1"/>
</dbReference>
<dbReference type="Pfam" id="PF04535">
    <property type="entry name" value="CASP_dom"/>
    <property type="match status" value="1"/>
</dbReference>
<accession>F2EL82</accession>
<name>CSPL4_HORVV</name>
<proteinExistence type="evidence at transcript level"/>
<sequence length="208" mass="21381">MGSFANGQNGSELGIQTPATGSNAALEPPTTSAAAPRCPRLGMAMVAARAAALVMALLSVSLMVSAKQRGTLAIFGIEIPLYAKWSLSDSLQSLVGISAAAAAYSLAQLLSIAHTALKKAPVVPSRRYAWMLLAGDQVFAYAMLSAGSAAAAVANLNRTGVRHTALPNFCKPLPRFCDLSAASIACAFLGCAFLAASAVIDVIWLSRL</sequence>
<keyword id="KW-1003">Cell membrane</keyword>
<keyword id="KW-0325">Glycoprotein</keyword>
<keyword id="KW-0472">Membrane</keyword>
<keyword id="KW-1185">Reference proteome</keyword>
<keyword id="KW-0812">Transmembrane</keyword>
<keyword id="KW-1133">Transmembrane helix</keyword>
<protein>
    <recommendedName>
        <fullName>CASP-like protein 3A1</fullName>
        <shortName>HvCASPL3A1</shortName>
    </recommendedName>
</protein>
<organism>
    <name type="scientific">Hordeum vulgare subsp. vulgare</name>
    <name type="common">Domesticated barley</name>
    <dbReference type="NCBI Taxonomy" id="112509"/>
    <lineage>
        <taxon>Eukaryota</taxon>
        <taxon>Viridiplantae</taxon>
        <taxon>Streptophyta</taxon>
        <taxon>Embryophyta</taxon>
        <taxon>Tracheophyta</taxon>
        <taxon>Spermatophyta</taxon>
        <taxon>Magnoliopsida</taxon>
        <taxon>Liliopsida</taxon>
        <taxon>Poales</taxon>
        <taxon>Poaceae</taxon>
        <taxon>BOP clade</taxon>
        <taxon>Pooideae</taxon>
        <taxon>Triticodae</taxon>
        <taxon>Triticeae</taxon>
        <taxon>Hordeinae</taxon>
        <taxon>Hordeum</taxon>
    </lineage>
</organism>